<reference key="1">
    <citation type="journal article" date="1992" name="Nature">
        <title>The C. elegans genome sequencing project: a beginning.</title>
        <authorList>
            <person name="Sulston J."/>
            <person name="Du Z."/>
            <person name="Thomas K."/>
            <person name="Wilson R."/>
            <person name="Hillier L."/>
            <person name="Staden R."/>
            <person name="Halloran N."/>
            <person name="Green P."/>
            <person name="Thierry-Mieg J."/>
            <person name="Qiu L."/>
            <person name="Dear S."/>
            <person name="Coulson A."/>
            <person name="Craxton M."/>
            <person name="Durbin R."/>
            <person name="Berks M."/>
            <person name="Metzstein M."/>
            <person name="Hawkins T."/>
            <person name="Ainscough R."/>
            <person name="Waterston R."/>
        </authorList>
    </citation>
    <scope>NUCLEOTIDE SEQUENCE [LARGE SCALE GENOMIC DNA]</scope>
    <source>
        <strain>Bristol N2</strain>
    </source>
</reference>
<reference key="2">
    <citation type="journal article" date="1998" name="Science">
        <title>Genome sequence of the nematode C. elegans: a platform for investigating biology.</title>
        <authorList>
            <consortium name="The C. elegans sequencing consortium"/>
        </authorList>
    </citation>
    <scope>NUCLEOTIDE SEQUENCE [LARGE SCALE GENOMIC DNA]</scope>
    <source>
        <strain>Bristol N2</strain>
    </source>
</reference>
<keyword id="KW-1185">Reference proteome</keyword>
<protein>
    <recommendedName>
        <fullName>Uncharacterized protein ZK637.4</fullName>
    </recommendedName>
</protein>
<dbReference type="EMBL" id="Z11115">
    <property type="protein sequence ID" value="CAA77451.1"/>
    <property type="molecule type" value="Genomic_DNA"/>
</dbReference>
<dbReference type="PIR" id="S15790">
    <property type="entry name" value="S15790"/>
</dbReference>
<dbReference type="RefSeq" id="NP_001369830.1">
    <property type="nucleotide sequence ID" value="NM_001382951.2"/>
</dbReference>
<dbReference type="RefSeq" id="NP_498964.1">
    <property type="nucleotide sequence ID" value="NM_066563.1"/>
</dbReference>
<dbReference type="FunCoup" id="P30637">
    <property type="interactions" value="331"/>
</dbReference>
<dbReference type="PaxDb" id="6239-ZK637.4"/>
<dbReference type="EnsemblMetazoa" id="ZK637.4.1">
    <property type="protein sequence ID" value="ZK637.4.1"/>
    <property type="gene ID" value="WBGene00014024"/>
</dbReference>
<dbReference type="GeneID" id="191370"/>
<dbReference type="UCSC" id="ZK637.4">
    <property type="organism name" value="c. elegans"/>
</dbReference>
<dbReference type="AGR" id="WB:WBGene00014024"/>
<dbReference type="WormBase" id="ZK637.4">
    <property type="protein sequence ID" value="CE00435"/>
    <property type="gene ID" value="WBGene00014024"/>
</dbReference>
<dbReference type="eggNOG" id="ENOG502TAAJ">
    <property type="taxonomic scope" value="Eukaryota"/>
</dbReference>
<dbReference type="HOGENOM" id="CLU_184690_0_0_1"/>
<dbReference type="InParanoid" id="P30637"/>
<dbReference type="OMA" id="YLFSYPM"/>
<dbReference type="OrthoDB" id="5802514at2759"/>
<dbReference type="PRO" id="PR:P30637"/>
<dbReference type="Proteomes" id="UP000001940">
    <property type="component" value="Chromosome III"/>
</dbReference>
<dbReference type="Bgee" id="WBGene00014024">
    <property type="expression patterns" value="Expressed in pharyngeal muscle cell (C elegans) and 3 other cell types or tissues"/>
</dbReference>
<accession>P30637</accession>
<sequence length="95" mass="11230">MKSNPKYFLMNDVERQSKYSPKYVPNNSLKERILEFLDYYIAPLKLYLLSYPMPDCLWDNRKLRLKASGVQVTPSSEPVHIDDRLIHISQKQPSE</sequence>
<feature type="chain" id="PRO_0000065530" description="Uncharacterized protein ZK637.4">
    <location>
        <begin position="1"/>
        <end position="95"/>
    </location>
</feature>
<gene>
    <name type="ORF">ZK637.4</name>
</gene>
<proteinExistence type="predicted"/>
<organism>
    <name type="scientific">Caenorhabditis elegans</name>
    <dbReference type="NCBI Taxonomy" id="6239"/>
    <lineage>
        <taxon>Eukaryota</taxon>
        <taxon>Metazoa</taxon>
        <taxon>Ecdysozoa</taxon>
        <taxon>Nematoda</taxon>
        <taxon>Chromadorea</taxon>
        <taxon>Rhabditida</taxon>
        <taxon>Rhabditina</taxon>
        <taxon>Rhabditomorpha</taxon>
        <taxon>Rhabditoidea</taxon>
        <taxon>Rhabditidae</taxon>
        <taxon>Peloderinae</taxon>
        <taxon>Caenorhabditis</taxon>
    </lineage>
</organism>
<name>YOU4_CAEEL</name>